<gene>
    <name type="primary">GLN1-5</name>
    <name type="ordered locus">At1g48470</name>
    <name type="ORF">T1N15.8</name>
    <name type="ORF">T1N15_7</name>
</gene>
<evidence type="ECO:0000250" key="1"/>
<evidence type="ECO:0000250" key="2">
    <source>
        <dbReference type="UniProtKB" id="Q8LCE1"/>
    </source>
</evidence>
<evidence type="ECO:0000255" key="3">
    <source>
        <dbReference type="PROSITE-ProRule" id="PRU01330"/>
    </source>
</evidence>
<evidence type="ECO:0000255" key="4">
    <source>
        <dbReference type="PROSITE-ProRule" id="PRU01331"/>
    </source>
</evidence>
<evidence type="ECO:0000269" key="5">
    <source>
    </source>
</evidence>
<evidence type="ECO:0000305" key="6"/>
<evidence type="ECO:0007744" key="7">
    <source>
    </source>
</evidence>
<feature type="initiator methionine" description="Removed" evidence="7">
    <location>
        <position position="1"/>
    </location>
</feature>
<feature type="chain" id="PRO_0000239821" description="Glutamine synthetase cytosolic isozyme 1-5">
    <location>
        <begin position="2"/>
        <end position="353"/>
    </location>
</feature>
<feature type="domain" description="GS beta-grasp" evidence="3">
    <location>
        <begin position="19"/>
        <end position="99"/>
    </location>
</feature>
<feature type="domain" description="GS catalytic" evidence="4">
    <location>
        <begin position="106"/>
        <end position="353"/>
    </location>
</feature>
<feature type="modified residue" description="N-acetylthreonine" evidence="7">
    <location>
        <position position="2"/>
    </location>
</feature>
<feature type="modified residue" description="Phosphoserine" evidence="2">
    <location>
        <position position="3"/>
    </location>
</feature>
<feature type="sequence conflict" description="In Ref. 5; AAM62764." evidence="6" ref="5">
    <original>N</original>
    <variation>D</variation>
    <location>
        <position position="46"/>
    </location>
</feature>
<sequence length="353" mass="38907">MTSPLSDLLNLDLSDTKKIIAEYIWIGGSGMDIRSKARTLPGPVSNPTKLPKWNYDGSSTDQAAGDDSEVILYPQAIFKDPFRKGNNILVMCDAYRPAGDPIPTNNRHKAVKIFDHPNVKAEEPWFGIEQEYTLLKKDVKWPLGWPLGGFPGPQGPYYCAVGADKAFGRDIVDAHYKACLYSGLSIGGANGEVMPGQWEFQISPTVGIGAGDQLWVARYILERITEICGVIVSFDPKPIQGDWNGAAAHTNFSTKSMRKDGGLDLIKEAIKKLEVKHKQHIAAYGEGNERRLTGKHETADINTFSWGVADRGASVRVGRDTEKEGKGYFEDRRPSSNMDPYLVTSMIAETTIL</sequence>
<keyword id="KW-0007">Acetylation</keyword>
<keyword id="KW-0067">ATP-binding</keyword>
<keyword id="KW-0963">Cytoplasm</keyword>
<keyword id="KW-0436">Ligase</keyword>
<keyword id="KW-0535">Nitrogen fixation</keyword>
<keyword id="KW-0547">Nucleotide-binding</keyword>
<keyword id="KW-0597">Phosphoprotein</keyword>
<keyword id="KW-1185">Reference proteome</keyword>
<dbReference type="EC" id="6.3.1.2"/>
<dbReference type="EMBL" id="AC020889">
    <property type="protein sequence ID" value="AAF79695.1"/>
    <property type="status" value="ALT_SEQ"/>
    <property type="molecule type" value="Genomic_DNA"/>
</dbReference>
<dbReference type="EMBL" id="CP002684">
    <property type="protein sequence ID" value="AEE32297.1"/>
    <property type="molecule type" value="Genomic_DNA"/>
</dbReference>
<dbReference type="EMBL" id="AK118005">
    <property type="protein sequence ID" value="BAC42638.1"/>
    <property type="molecule type" value="mRNA"/>
</dbReference>
<dbReference type="EMBL" id="BT006245">
    <property type="protein sequence ID" value="AAP12894.1"/>
    <property type="molecule type" value="mRNA"/>
</dbReference>
<dbReference type="EMBL" id="AY085540">
    <property type="protein sequence ID" value="AAM62764.1"/>
    <property type="molecule type" value="mRNA"/>
</dbReference>
<dbReference type="RefSeq" id="NP_175280.1">
    <property type="nucleotide sequence ID" value="NM_103743.3"/>
</dbReference>
<dbReference type="SMR" id="Q8GXW5"/>
<dbReference type="BioGRID" id="26493">
    <property type="interactions" value="2"/>
</dbReference>
<dbReference type="FunCoup" id="Q8GXW5">
    <property type="interactions" value="1617"/>
</dbReference>
<dbReference type="IntAct" id="Q8GXW5">
    <property type="interactions" value="1"/>
</dbReference>
<dbReference type="STRING" id="3702.Q8GXW5"/>
<dbReference type="GlyGen" id="Q8GXW5">
    <property type="glycosylation" value="1 site"/>
</dbReference>
<dbReference type="iPTMnet" id="Q8GXW5"/>
<dbReference type="PaxDb" id="3702-AT1G48470.1"/>
<dbReference type="ProteomicsDB" id="247256"/>
<dbReference type="DNASU" id="841268"/>
<dbReference type="EnsemblPlants" id="AT1G48470.1">
    <property type="protein sequence ID" value="AT1G48470.1"/>
    <property type="gene ID" value="AT1G48470"/>
</dbReference>
<dbReference type="GeneID" id="841268"/>
<dbReference type="Gramene" id="AT1G48470.1">
    <property type="protein sequence ID" value="AT1G48470.1"/>
    <property type="gene ID" value="AT1G48470"/>
</dbReference>
<dbReference type="KEGG" id="ath:AT1G48470"/>
<dbReference type="Araport" id="AT1G48470"/>
<dbReference type="TAIR" id="AT1G48470">
    <property type="gene designation" value="GLN1"/>
</dbReference>
<dbReference type="eggNOG" id="KOG0683">
    <property type="taxonomic scope" value="Eukaryota"/>
</dbReference>
<dbReference type="HOGENOM" id="CLU_036762_1_1_1"/>
<dbReference type="InParanoid" id="Q8GXW5"/>
<dbReference type="OMA" id="GPCERIN"/>
<dbReference type="PhylomeDB" id="Q8GXW5"/>
<dbReference type="PRO" id="PR:Q8GXW5"/>
<dbReference type="Proteomes" id="UP000006548">
    <property type="component" value="Chromosome 1"/>
</dbReference>
<dbReference type="ExpressionAtlas" id="Q8GXW5">
    <property type="expression patterns" value="baseline and differential"/>
</dbReference>
<dbReference type="GO" id="GO:0009507">
    <property type="term" value="C:chloroplast"/>
    <property type="evidence" value="ECO:0007005"/>
    <property type="project" value="TAIR"/>
</dbReference>
<dbReference type="GO" id="GO:0009506">
    <property type="term" value="C:plasmodesma"/>
    <property type="evidence" value="ECO:0007005"/>
    <property type="project" value="TAIR"/>
</dbReference>
<dbReference type="GO" id="GO:0005524">
    <property type="term" value="F:ATP binding"/>
    <property type="evidence" value="ECO:0007669"/>
    <property type="project" value="UniProtKB-KW"/>
</dbReference>
<dbReference type="GO" id="GO:0004356">
    <property type="term" value="F:glutamine synthetase activity"/>
    <property type="evidence" value="ECO:0007669"/>
    <property type="project" value="UniProtKB-EC"/>
</dbReference>
<dbReference type="GO" id="GO:0006542">
    <property type="term" value="P:glutamine biosynthetic process"/>
    <property type="evidence" value="ECO:0007669"/>
    <property type="project" value="InterPro"/>
</dbReference>
<dbReference type="FunFam" id="3.10.20.70:FF:000004">
    <property type="entry name" value="Glutamine synthetase"/>
    <property type="match status" value="1"/>
</dbReference>
<dbReference type="FunFam" id="3.30.590.10:FF:000004">
    <property type="entry name" value="Glutamine synthetase"/>
    <property type="match status" value="1"/>
</dbReference>
<dbReference type="Gene3D" id="3.10.20.70">
    <property type="entry name" value="Glutamine synthetase, N-terminal domain"/>
    <property type="match status" value="1"/>
</dbReference>
<dbReference type="Gene3D" id="3.30.590.10">
    <property type="entry name" value="Glutamine synthetase/guanido kinase, catalytic domain"/>
    <property type="match status" value="1"/>
</dbReference>
<dbReference type="InterPro" id="IPR008147">
    <property type="entry name" value="Gln_synt_N"/>
</dbReference>
<dbReference type="InterPro" id="IPR036651">
    <property type="entry name" value="Gln_synt_N_sf"/>
</dbReference>
<dbReference type="InterPro" id="IPR014746">
    <property type="entry name" value="Gln_synth/guanido_kin_cat_dom"/>
</dbReference>
<dbReference type="InterPro" id="IPR008146">
    <property type="entry name" value="Gln_synth_cat_dom"/>
</dbReference>
<dbReference type="InterPro" id="IPR027303">
    <property type="entry name" value="Gln_synth_gly_rich_site"/>
</dbReference>
<dbReference type="InterPro" id="IPR027302">
    <property type="entry name" value="Gln_synth_N_conserv_site"/>
</dbReference>
<dbReference type="InterPro" id="IPR050292">
    <property type="entry name" value="Glutamine_Synthetase"/>
</dbReference>
<dbReference type="PANTHER" id="PTHR20852">
    <property type="entry name" value="GLUTAMINE SYNTHETASE"/>
    <property type="match status" value="1"/>
</dbReference>
<dbReference type="PANTHER" id="PTHR20852:SF105">
    <property type="entry name" value="GLUTAMINE SYNTHETASE CYTOSOLIC ISOZYME 1-5"/>
    <property type="match status" value="1"/>
</dbReference>
<dbReference type="Pfam" id="PF00120">
    <property type="entry name" value="Gln-synt_C"/>
    <property type="match status" value="1"/>
</dbReference>
<dbReference type="SMART" id="SM01230">
    <property type="entry name" value="Gln-synt_C"/>
    <property type="match status" value="1"/>
</dbReference>
<dbReference type="SUPFAM" id="SSF54368">
    <property type="entry name" value="Glutamine synthetase, N-terminal domain"/>
    <property type="match status" value="1"/>
</dbReference>
<dbReference type="SUPFAM" id="SSF55931">
    <property type="entry name" value="Glutamine synthetase/guanido kinase"/>
    <property type="match status" value="1"/>
</dbReference>
<dbReference type="PROSITE" id="PS00180">
    <property type="entry name" value="GLNA_1"/>
    <property type="match status" value="1"/>
</dbReference>
<dbReference type="PROSITE" id="PS00181">
    <property type="entry name" value="GLNA_ATP"/>
    <property type="match status" value="1"/>
</dbReference>
<dbReference type="PROSITE" id="PS51986">
    <property type="entry name" value="GS_BETA_GRASP"/>
    <property type="match status" value="1"/>
</dbReference>
<dbReference type="PROSITE" id="PS51987">
    <property type="entry name" value="GS_CATALYTIC"/>
    <property type="match status" value="1"/>
</dbReference>
<proteinExistence type="evidence at protein level"/>
<organism>
    <name type="scientific">Arabidopsis thaliana</name>
    <name type="common">Mouse-ear cress</name>
    <dbReference type="NCBI Taxonomy" id="3702"/>
    <lineage>
        <taxon>Eukaryota</taxon>
        <taxon>Viridiplantae</taxon>
        <taxon>Streptophyta</taxon>
        <taxon>Embryophyta</taxon>
        <taxon>Tracheophyta</taxon>
        <taxon>Spermatophyta</taxon>
        <taxon>Magnoliopsida</taxon>
        <taxon>eudicotyledons</taxon>
        <taxon>Gunneridae</taxon>
        <taxon>Pentapetalae</taxon>
        <taxon>rosids</taxon>
        <taxon>malvids</taxon>
        <taxon>Brassicales</taxon>
        <taxon>Brassicaceae</taxon>
        <taxon>Camelineae</taxon>
        <taxon>Arabidopsis</taxon>
    </lineage>
</organism>
<name>GLN15_ARATH</name>
<reference key="1">
    <citation type="journal article" date="2000" name="Nature">
        <title>Sequence and analysis of chromosome 1 of the plant Arabidopsis thaliana.</title>
        <authorList>
            <person name="Theologis A."/>
            <person name="Ecker J.R."/>
            <person name="Palm C.J."/>
            <person name="Federspiel N.A."/>
            <person name="Kaul S."/>
            <person name="White O."/>
            <person name="Alonso J."/>
            <person name="Altafi H."/>
            <person name="Araujo R."/>
            <person name="Bowman C.L."/>
            <person name="Brooks S.Y."/>
            <person name="Buehler E."/>
            <person name="Chan A."/>
            <person name="Chao Q."/>
            <person name="Chen H."/>
            <person name="Cheuk R.F."/>
            <person name="Chin C.W."/>
            <person name="Chung M.K."/>
            <person name="Conn L."/>
            <person name="Conway A.B."/>
            <person name="Conway A.R."/>
            <person name="Creasy T.H."/>
            <person name="Dewar K."/>
            <person name="Dunn P."/>
            <person name="Etgu P."/>
            <person name="Feldblyum T.V."/>
            <person name="Feng J.-D."/>
            <person name="Fong B."/>
            <person name="Fujii C.Y."/>
            <person name="Gill J.E."/>
            <person name="Goldsmith A.D."/>
            <person name="Haas B."/>
            <person name="Hansen N.F."/>
            <person name="Hughes B."/>
            <person name="Huizar L."/>
            <person name="Hunter J.L."/>
            <person name="Jenkins J."/>
            <person name="Johnson-Hopson C."/>
            <person name="Khan S."/>
            <person name="Khaykin E."/>
            <person name="Kim C.J."/>
            <person name="Koo H.L."/>
            <person name="Kremenetskaia I."/>
            <person name="Kurtz D.B."/>
            <person name="Kwan A."/>
            <person name="Lam B."/>
            <person name="Langin-Hooper S."/>
            <person name="Lee A."/>
            <person name="Lee J.M."/>
            <person name="Lenz C.A."/>
            <person name="Li J.H."/>
            <person name="Li Y.-P."/>
            <person name="Lin X."/>
            <person name="Liu S.X."/>
            <person name="Liu Z.A."/>
            <person name="Luros J.S."/>
            <person name="Maiti R."/>
            <person name="Marziali A."/>
            <person name="Militscher J."/>
            <person name="Miranda M."/>
            <person name="Nguyen M."/>
            <person name="Nierman W.C."/>
            <person name="Osborne B.I."/>
            <person name="Pai G."/>
            <person name="Peterson J."/>
            <person name="Pham P.K."/>
            <person name="Rizzo M."/>
            <person name="Rooney T."/>
            <person name="Rowley D."/>
            <person name="Sakano H."/>
            <person name="Salzberg S.L."/>
            <person name="Schwartz J.R."/>
            <person name="Shinn P."/>
            <person name="Southwick A.M."/>
            <person name="Sun H."/>
            <person name="Tallon L.J."/>
            <person name="Tambunga G."/>
            <person name="Toriumi M.J."/>
            <person name="Town C.D."/>
            <person name="Utterback T."/>
            <person name="Van Aken S."/>
            <person name="Vaysberg M."/>
            <person name="Vysotskaia V.S."/>
            <person name="Walker M."/>
            <person name="Wu D."/>
            <person name="Yu G."/>
            <person name="Fraser C.M."/>
            <person name="Venter J.C."/>
            <person name="Davis R.W."/>
        </authorList>
    </citation>
    <scope>NUCLEOTIDE SEQUENCE [LARGE SCALE GENOMIC DNA]</scope>
    <source>
        <strain>cv. Columbia</strain>
    </source>
</reference>
<reference key="2">
    <citation type="journal article" date="2017" name="Plant J.">
        <title>Araport11: a complete reannotation of the Arabidopsis thaliana reference genome.</title>
        <authorList>
            <person name="Cheng C.Y."/>
            <person name="Krishnakumar V."/>
            <person name="Chan A.P."/>
            <person name="Thibaud-Nissen F."/>
            <person name="Schobel S."/>
            <person name="Town C.D."/>
        </authorList>
    </citation>
    <scope>GENOME REANNOTATION</scope>
    <source>
        <strain>cv. Columbia</strain>
    </source>
</reference>
<reference key="3">
    <citation type="journal article" date="2002" name="Science">
        <title>Functional annotation of a full-length Arabidopsis cDNA collection.</title>
        <authorList>
            <person name="Seki M."/>
            <person name="Narusaka M."/>
            <person name="Kamiya A."/>
            <person name="Ishida J."/>
            <person name="Satou M."/>
            <person name="Sakurai T."/>
            <person name="Nakajima M."/>
            <person name="Enju A."/>
            <person name="Akiyama K."/>
            <person name="Oono Y."/>
            <person name="Muramatsu M."/>
            <person name="Hayashizaki Y."/>
            <person name="Kawai J."/>
            <person name="Carninci P."/>
            <person name="Itoh M."/>
            <person name="Ishii Y."/>
            <person name="Arakawa T."/>
            <person name="Shibata K."/>
            <person name="Shinagawa A."/>
            <person name="Shinozaki K."/>
        </authorList>
    </citation>
    <scope>NUCLEOTIDE SEQUENCE [LARGE SCALE MRNA]</scope>
    <source>
        <strain>cv. Columbia</strain>
    </source>
</reference>
<reference key="4">
    <citation type="journal article" date="2003" name="Science">
        <title>Empirical analysis of transcriptional activity in the Arabidopsis genome.</title>
        <authorList>
            <person name="Yamada K."/>
            <person name="Lim J."/>
            <person name="Dale J.M."/>
            <person name="Chen H."/>
            <person name="Shinn P."/>
            <person name="Palm C.J."/>
            <person name="Southwick A.M."/>
            <person name="Wu H.C."/>
            <person name="Kim C.J."/>
            <person name="Nguyen M."/>
            <person name="Pham P.K."/>
            <person name="Cheuk R.F."/>
            <person name="Karlin-Newmann G."/>
            <person name="Liu S.X."/>
            <person name="Lam B."/>
            <person name="Sakano H."/>
            <person name="Wu T."/>
            <person name="Yu G."/>
            <person name="Miranda M."/>
            <person name="Quach H.L."/>
            <person name="Tripp M."/>
            <person name="Chang C.H."/>
            <person name="Lee J.M."/>
            <person name="Toriumi M.J."/>
            <person name="Chan M.M."/>
            <person name="Tang C.C."/>
            <person name="Onodera C.S."/>
            <person name="Deng J.M."/>
            <person name="Akiyama K."/>
            <person name="Ansari Y."/>
            <person name="Arakawa T."/>
            <person name="Banh J."/>
            <person name="Banno F."/>
            <person name="Bowser L."/>
            <person name="Brooks S.Y."/>
            <person name="Carninci P."/>
            <person name="Chao Q."/>
            <person name="Choy N."/>
            <person name="Enju A."/>
            <person name="Goldsmith A.D."/>
            <person name="Gurjal M."/>
            <person name="Hansen N.F."/>
            <person name="Hayashizaki Y."/>
            <person name="Johnson-Hopson C."/>
            <person name="Hsuan V.W."/>
            <person name="Iida K."/>
            <person name="Karnes M."/>
            <person name="Khan S."/>
            <person name="Koesema E."/>
            <person name="Ishida J."/>
            <person name="Jiang P.X."/>
            <person name="Jones T."/>
            <person name="Kawai J."/>
            <person name="Kamiya A."/>
            <person name="Meyers C."/>
            <person name="Nakajima M."/>
            <person name="Narusaka M."/>
            <person name="Seki M."/>
            <person name="Sakurai T."/>
            <person name="Satou M."/>
            <person name="Tamse R."/>
            <person name="Vaysberg M."/>
            <person name="Wallender E.K."/>
            <person name="Wong C."/>
            <person name="Yamamura Y."/>
            <person name="Yuan S."/>
            <person name="Shinozaki K."/>
            <person name="Davis R.W."/>
            <person name="Theologis A."/>
            <person name="Ecker J.R."/>
        </authorList>
    </citation>
    <scope>NUCLEOTIDE SEQUENCE [LARGE SCALE MRNA]</scope>
    <source>
        <strain>cv. Columbia</strain>
    </source>
</reference>
<reference key="5">
    <citation type="submission" date="2002-03" db="EMBL/GenBank/DDBJ databases">
        <title>Full-length cDNA from Arabidopsis thaliana.</title>
        <authorList>
            <person name="Brover V.V."/>
            <person name="Troukhan M.E."/>
            <person name="Alexandrov N.A."/>
            <person name="Lu Y.-P."/>
            <person name="Flavell R.B."/>
            <person name="Feldmann K.A."/>
        </authorList>
    </citation>
    <scope>NUCLEOTIDE SEQUENCE [LARGE SCALE MRNA]</scope>
</reference>
<reference key="6">
    <citation type="journal article" date="2004" name="J. Biol. Chem.">
        <title>Kinetic properties and ammonium-dependent regulation of cytosolic isoenzymes of glutamine synthetase in Arabidopsis.</title>
        <authorList>
            <person name="Ishiyama K."/>
            <person name="Inoue E."/>
            <person name="Watanabe-Takahashi A."/>
            <person name="Obara M."/>
            <person name="Yamaya T."/>
            <person name="Takahashi H."/>
        </authorList>
    </citation>
    <scope>TISSUE SPECIFICITY</scope>
</reference>
<reference key="7">
    <citation type="journal article" date="2012" name="Mol. Cell. Proteomics">
        <title>Comparative large-scale characterisation of plant vs. mammal proteins reveals similar and idiosyncratic N-alpha acetylation features.</title>
        <authorList>
            <person name="Bienvenut W.V."/>
            <person name="Sumpton D."/>
            <person name="Martinez A."/>
            <person name="Lilla S."/>
            <person name="Espagne C."/>
            <person name="Meinnel T."/>
            <person name="Giglione C."/>
        </authorList>
    </citation>
    <scope>ACETYLATION [LARGE SCALE ANALYSIS] AT THR-2</scope>
    <scope>CLEAVAGE OF INITIATOR METHIONINE [LARGE SCALE ANALYSIS]</scope>
    <scope>IDENTIFICATION BY MASS SPECTROMETRY [LARGE SCALE ANALYSIS]</scope>
</reference>
<comment type="catalytic activity">
    <reaction>
        <text>L-glutamate + NH4(+) + ATP = L-glutamine + ADP + phosphate + H(+)</text>
        <dbReference type="Rhea" id="RHEA:16169"/>
        <dbReference type="ChEBI" id="CHEBI:15378"/>
        <dbReference type="ChEBI" id="CHEBI:28938"/>
        <dbReference type="ChEBI" id="CHEBI:29985"/>
        <dbReference type="ChEBI" id="CHEBI:30616"/>
        <dbReference type="ChEBI" id="CHEBI:43474"/>
        <dbReference type="ChEBI" id="CHEBI:58359"/>
        <dbReference type="ChEBI" id="CHEBI:456216"/>
        <dbReference type="EC" id="6.3.1.2"/>
    </reaction>
</comment>
<comment type="subunit">
    <text evidence="1">Homooctamer.</text>
</comment>
<comment type="subcellular location">
    <subcellularLocation>
        <location>Cytoplasm</location>
    </subcellularLocation>
</comment>
<comment type="tissue specificity">
    <text evidence="5">Not expressed in roots.</text>
</comment>
<comment type="similarity">
    <text evidence="6">Belongs to the glutamine synthetase family.</text>
</comment>
<comment type="sequence caution" evidence="6">
    <conflict type="erroneous gene model prediction">
        <sequence resource="EMBL-CDS" id="AAF79695"/>
    </conflict>
</comment>
<accession>Q8GXW5</accession>
<accession>Q8LEA1</accession>
<accession>Q9LP78</accession>
<protein>
    <recommendedName>
        <fullName>Glutamine synthetase cytosolic isozyme 1-5</fullName>
        <ecNumber>6.3.1.2</ecNumber>
    </recommendedName>
    <alternativeName>
        <fullName>Glutamate--ammonia ligase GLN1;5</fullName>
        <shortName>GLN1;5</shortName>
    </alternativeName>
</protein>